<feature type="chain" id="PRO_0000388586" description="Golgi to ER traffic protein 1">
    <location>
        <begin position="1"/>
        <end position="196"/>
    </location>
</feature>
<feature type="topological domain" description="Lumenal" evidence="1">
    <location>
        <begin position="1"/>
        <end position="10"/>
    </location>
</feature>
<feature type="transmembrane region" description="Helical" evidence="1">
    <location>
        <begin position="11"/>
        <end position="30"/>
    </location>
</feature>
<feature type="topological domain" description="Cytoplasmic" evidence="1">
    <location>
        <begin position="31"/>
        <end position="114"/>
    </location>
</feature>
<feature type="transmembrane region" description="Helical" evidence="1">
    <location>
        <begin position="115"/>
        <end position="135"/>
    </location>
</feature>
<feature type="topological domain" description="Lumenal" evidence="1">
    <location>
        <begin position="136"/>
        <end position="159"/>
    </location>
</feature>
<feature type="transmembrane region" description="Helical" evidence="1">
    <location>
        <begin position="160"/>
        <end position="176"/>
    </location>
</feature>
<feature type="topological domain" description="Cytoplasmic" evidence="1">
    <location>
        <begin position="177"/>
        <end position="196"/>
    </location>
</feature>
<feature type="coiled-coil region" evidence="1">
    <location>
        <begin position="76"/>
        <end position="114"/>
    </location>
</feature>
<sequence>MFLDLHPYTILVSIFIILLVKQIVGRIGKSTIQEFVWLLYLKISPNQAIKDYNTKKVELHEINKQKRSISAQDEYAKWTKLNRQADKLTSEIQKLNEEIRQSKASIDKLANVLLMVLTTLPIWVARIFFRKTHLFYLRSGIFPRYIEWVLALPFFPSGAVGLTVWMFAANSVIHNVISLVSFAFEKRVEKPVRQKK</sequence>
<dbReference type="EMBL" id="GG692396">
    <property type="protein sequence ID" value="EER34221.1"/>
    <property type="molecule type" value="Genomic_DNA"/>
</dbReference>
<dbReference type="RefSeq" id="XP_002546776.1">
    <property type="nucleotide sequence ID" value="XM_002546730.1"/>
</dbReference>
<dbReference type="SMR" id="C5M5F1"/>
<dbReference type="STRING" id="294747.C5M5F1"/>
<dbReference type="EnsemblFungi" id="CTRG_01081-t43_1">
    <property type="protein sequence ID" value="CTRG_01081-t43_1-p1"/>
    <property type="gene ID" value="CTRG_01081"/>
</dbReference>
<dbReference type="GeneID" id="8301594"/>
<dbReference type="KEGG" id="ctp:CTRG_01081"/>
<dbReference type="VEuPathDB" id="FungiDB:CTRG_01081"/>
<dbReference type="eggNOG" id="KOG4253">
    <property type="taxonomic scope" value="Eukaryota"/>
</dbReference>
<dbReference type="HOGENOM" id="CLU_089418_2_0_1"/>
<dbReference type="OrthoDB" id="69461at2759"/>
<dbReference type="Proteomes" id="UP000002037">
    <property type="component" value="Unassembled WGS sequence"/>
</dbReference>
<dbReference type="GO" id="GO:0005789">
    <property type="term" value="C:endoplasmic reticulum membrane"/>
    <property type="evidence" value="ECO:0007669"/>
    <property type="project" value="UniProtKB-SubCell"/>
</dbReference>
<dbReference type="GO" id="GO:0043529">
    <property type="term" value="C:GET complex"/>
    <property type="evidence" value="ECO:0007669"/>
    <property type="project" value="UniProtKB-UniRule"/>
</dbReference>
<dbReference type="GO" id="GO:0000139">
    <property type="term" value="C:Golgi membrane"/>
    <property type="evidence" value="ECO:0007669"/>
    <property type="project" value="UniProtKB-SubCell"/>
</dbReference>
<dbReference type="GO" id="GO:0043495">
    <property type="term" value="F:protein-membrane adaptor activity"/>
    <property type="evidence" value="ECO:0007669"/>
    <property type="project" value="TreeGrafter"/>
</dbReference>
<dbReference type="GO" id="GO:0071816">
    <property type="term" value="P:tail-anchored membrane protein insertion into ER membrane"/>
    <property type="evidence" value="ECO:0007669"/>
    <property type="project" value="InterPro"/>
</dbReference>
<dbReference type="GO" id="GO:0016192">
    <property type="term" value="P:vesicle-mediated transport"/>
    <property type="evidence" value="ECO:0007669"/>
    <property type="project" value="UniProtKB-KW"/>
</dbReference>
<dbReference type="Gene3D" id="1.10.287.660">
    <property type="entry name" value="Helix hairpin bin"/>
    <property type="match status" value="1"/>
</dbReference>
<dbReference type="HAMAP" id="MF_03113">
    <property type="entry name" value="Get1"/>
    <property type="match status" value="1"/>
</dbReference>
<dbReference type="InterPro" id="IPR028945">
    <property type="entry name" value="Get1"/>
</dbReference>
<dbReference type="InterPro" id="IPR027538">
    <property type="entry name" value="Get1_fungi"/>
</dbReference>
<dbReference type="InterPro" id="IPR029012">
    <property type="entry name" value="Helix_hairpin_bin_sf"/>
</dbReference>
<dbReference type="PANTHER" id="PTHR42650:SF1">
    <property type="entry name" value="GUIDED ENTRY OF TAIL-ANCHORED PROTEINS FACTOR 1"/>
    <property type="match status" value="1"/>
</dbReference>
<dbReference type="PANTHER" id="PTHR42650">
    <property type="entry name" value="TAIL-ANCHORED PROTEIN INSERTION RECEPTOR WRB"/>
    <property type="match status" value="1"/>
</dbReference>
<dbReference type="Pfam" id="PF04420">
    <property type="entry name" value="CHD5"/>
    <property type="match status" value="1"/>
</dbReference>
<reference key="1">
    <citation type="journal article" date="2009" name="Nature">
        <title>Evolution of pathogenicity and sexual reproduction in eight Candida genomes.</title>
        <authorList>
            <person name="Butler G."/>
            <person name="Rasmussen M.D."/>
            <person name="Lin M.F."/>
            <person name="Santos M.A.S."/>
            <person name="Sakthikumar S."/>
            <person name="Munro C.A."/>
            <person name="Rheinbay E."/>
            <person name="Grabherr M."/>
            <person name="Forche A."/>
            <person name="Reedy J.L."/>
            <person name="Agrafioti I."/>
            <person name="Arnaud M.B."/>
            <person name="Bates S."/>
            <person name="Brown A.J.P."/>
            <person name="Brunke S."/>
            <person name="Costanzo M.C."/>
            <person name="Fitzpatrick D.A."/>
            <person name="de Groot P.W.J."/>
            <person name="Harris D."/>
            <person name="Hoyer L.L."/>
            <person name="Hube B."/>
            <person name="Klis F.M."/>
            <person name="Kodira C."/>
            <person name="Lennard N."/>
            <person name="Logue M.E."/>
            <person name="Martin R."/>
            <person name="Neiman A.M."/>
            <person name="Nikolaou E."/>
            <person name="Quail M.A."/>
            <person name="Quinn J."/>
            <person name="Santos M.C."/>
            <person name="Schmitzberger F.F."/>
            <person name="Sherlock G."/>
            <person name="Shah P."/>
            <person name="Silverstein K.A.T."/>
            <person name="Skrzypek M.S."/>
            <person name="Soll D."/>
            <person name="Staggs R."/>
            <person name="Stansfield I."/>
            <person name="Stumpf M.P.H."/>
            <person name="Sudbery P.E."/>
            <person name="Srikantha T."/>
            <person name="Zeng Q."/>
            <person name="Berman J."/>
            <person name="Berriman M."/>
            <person name="Heitman J."/>
            <person name="Gow N.A.R."/>
            <person name="Lorenz M.C."/>
            <person name="Birren B.W."/>
            <person name="Kellis M."/>
            <person name="Cuomo C.A."/>
        </authorList>
    </citation>
    <scope>NUCLEOTIDE SEQUENCE [LARGE SCALE GENOMIC DNA]</scope>
    <source>
        <strain>ATCC MYA-3404 / T1</strain>
    </source>
</reference>
<organism>
    <name type="scientific">Candida tropicalis (strain ATCC MYA-3404 / T1)</name>
    <name type="common">Yeast</name>
    <dbReference type="NCBI Taxonomy" id="294747"/>
    <lineage>
        <taxon>Eukaryota</taxon>
        <taxon>Fungi</taxon>
        <taxon>Dikarya</taxon>
        <taxon>Ascomycota</taxon>
        <taxon>Saccharomycotina</taxon>
        <taxon>Pichiomycetes</taxon>
        <taxon>Debaryomycetaceae</taxon>
        <taxon>Candida/Lodderomyces clade</taxon>
        <taxon>Candida</taxon>
    </lineage>
</organism>
<gene>
    <name evidence="1" type="primary">GET1</name>
    <name type="ORF">CTRG_01081</name>
</gene>
<proteinExistence type="inferred from homology"/>
<protein>
    <recommendedName>
        <fullName evidence="1">Golgi to ER traffic protein 1</fullName>
    </recommendedName>
    <alternativeName>
        <fullName evidence="1">Guided entry of tail-anchored proteins 1</fullName>
    </alternativeName>
</protein>
<comment type="function">
    <text evidence="1">Required for the post-translational delivery of tail-anchored (TA) proteins to the endoplasmic reticulum. Together with GET2, acts as a membrane receptor for soluble GET3, which recognizes and selectively binds the transmembrane domain of TA proteins in the cytosol. The GET complex cooperates with the HDEL receptor ERD2 to mediate the ATP-dependent retrieval of resident ER proteins that contain a C-terminal H-D-E-L retention signal from the Golgi to the ER.</text>
</comment>
<comment type="subunit">
    <text evidence="1">Component of the Golgi to ER traffic (GET) complex, which is composed of GET1, GET2 and GET3. Within the complex, GET1 and GET2 form a heterotetramer which is stabilized by phosphatidylinositol binding and which binds to the GET3 homodimer.</text>
</comment>
<comment type="subcellular location">
    <subcellularLocation>
        <location evidence="1">Endoplasmic reticulum membrane</location>
        <topology evidence="1">Multi-pass membrane protein</topology>
    </subcellularLocation>
    <subcellularLocation>
        <location evidence="1">Golgi apparatus membrane</location>
        <topology evidence="1">Multi-pass membrane protein</topology>
    </subcellularLocation>
</comment>
<comment type="similarity">
    <text evidence="1">Belongs to the WRB/GET1 family.</text>
</comment>
<name>GET1_CANTT</name>
<accession>C5M5F1</accession>
<evidence type="ECO:0000255" key="1">
    <source>
        <dbReference type="HAMAP-Rule" id="MF_03113"/>
    </source>
</evidence>
<keyword id="KW-0175">Coiled coil</keyword>
<keyword id="KW-0256">Endoplasmic reticulum</keyword>
<keyword id="KW-0931">ER-Golgi transport</keyword>
<keyword id="KW-0333">Golgi apparatus</keyword>
<keyword id="KW-0472">Membrane</keyword>
<keyword id="KW-1185">Reference proteome</keyword>
<keyword id="KW-0812">Transmembrane</keyword>
<keyword id="KW-1133">Transmembrane helix</keyword>
<keyword id="KW-0813">Transport</keyword>